<reference key="1">
    <citation type="journal article" date="1997" name="Nature">
        <title>The nucleotide sequence of Saccharomyces cerevisiae chromosome XVI.</title>
        <authorList>
            <person name="Bussey H."/>
            <person name="Storms R.K."/>
            <person name="Ahmed A."/>
            <person name="Albermann K."/>
            <person name="Allen E."/>
            <person name="Ansorge W."/>
            <person name="Araujo R."/>
            <person name="Aparicio A."/>
            <person name="Barrell B.G."/>
            <person name="Badcock K."/>
            <person name="Benes V."/>
            <person name="Botstein D."/>
            <person name="Bowman S."/>
            <person name="Brueckner M."/>
            <person name="Carpenter J."/>
            <person name="Cherry J.M."/>
            <person name="Chung E."/>
            <person name="Churcher C.M."/>
            <person name="Coster F."/>
            <person name="Davis K."/>
            <person name="Davis R.W."/>
            <person name="Dietrich F.S."/>
            <person name="Delius H."/>
            <person name="DiPaolo T."/>
            <person name="Dubois E."/>
            <person name="Duesterhoeft A."/>
            <person name="Duncan M."/>
            <person name="Floeth M."/>
            <person name="Fortin N."/>
            <person name="Friesen J.D."/>
            <person name="Fritz C."/>
            <person name="Goffeau A."/>
            <person name="Hall J."/>
            <person name="Hebling U."/>
            <person name="Heumann K."/>
            <person name="Hilbert H."/>
            <person name="Hillier L.W."/>
            <person name="Hunicke-Smith S."/>
            <person name="Hyman R.W."/>
            <person name="Johnston M."/>
            <person name="Kalman S."/>
            <person name="Kleine K."/>
            <person name="Komp C."/>
            <person name="Kurdi O."/>
            <person name="Lashkari D."/>
            <person name="Lew H."/>
            <person name="Lin A."/>
            <person name="Lin D."/>
            <person name="Louis E.J."/>
            <person name="Marathe R."/>
            <person name="Messenguy F."/>
            <person name="Mewes H.-W."/>
            <person name="Mirtipati S."/>
            <person name="Moestl D."/>
            <person name="Mueller-Auer S."/>
            <person name="Namath A."/>
            <person name="Nentwich U."/>
            <person name="Oefner P."/>
            <person name="Pearson D."/>
            <person name="Petel F.X."/>
            <person name="Pohl T.M."/>
            <person name="Purnelle B."/>
            <person name="Rajandream M.A."/>
            <person name="Rechmann S."/>
            <person name="Rieger M."/>
            <person name="Riles L."/>
            <person name="Roberts D."/>
            <person name="Schaefer M."/>
            <person name="Scharfe M."/>
            <person name="Scherens B."/>
            <person name="Schramm S."/>
            <person name="Schroeder M."/>
            <person name="Sdicu A.-M."/>
            <person name="Tettelin H."/>
            <person name="Urrestarazu L.A."/>
            <person name="Ushinsky S."/>
            <person name="Vierendeels F."/>
            <person name="Vissers S."/>
            <person name="Voss H."/>
            <person name="Walsh S.V."/>
            <person name="Wambutt R."/>
            <person name="Wang Y."/>
            <person name="Wedler E."/>
            <person name="Wedler H."/>
            <person name="Winnett E."/>
            <person name="Zhong W.-W."/>
            <person name="Zollner A."/>
            <person name="Vo D.H."/>
            <person name="Hani J."/>
        </authorList>
    </citation>
    <scope>NUCLEOTIDE SEQUENCE [LARGE SCALE GENOMIC DNA]</scope>
    <source>
        <strain>ATCC 204508 / S288c</strain>
    </source>
</reference>
<reference key="2">
    <citation type="journal article" date="2014" name="G3 (Bethesda)">
        <title>The reference genome sequence of Saccharomyces cerevisiae: Then and now.</title>
        <authorList>
            <person name="Engel S.R."/>
            <person name="Dietrich F.S."/>
            <person name="Fisk D.G."/>
            <person name="Binkley G."/>
            <person name="Balakrishnan R."/>
            <person name="Costanzo M.C."/>
            <person name="Dwight S.S."/>
            <person name="Hitz B.C."/>
            <person name="Karra K."/>
            <person name="Nash R.S."/>
            <person name="Weng S."/>
            <person name="Wong E.D."/>
            <person name="Lloyd P."/>
            <person name="Skrzypek M.S."/>
            <person name="Miyasato S.R."/>
            <person name="Simison M."/>
            <person name="Cherry J.M."/>
        </authorList>
    </citation>
    <scope>GENOME REANNOTATION</scope>
    <source>
        <strain>ATCC 204508 / S288c</strain>
    </source>
</reference>
<reference key="3">
    <citation type="journal article" date="2003" name="Nature">
        <title>Global analysis of protein localization in budding yeast.</title>
        <authorList>
            <person name="Huh W.-K."/>
            <person name="Falvo J.V."/>
            <person name="Gerke L.C."/>
            <person name="Carroll A.S."/>
            <person name="Howson R.W."/>
            <person name="Weissman J.S."/>
            <person name="O'Shea E.K."/>
        </authorList>
    </citation>
    <scope>SUBCELLULAR LOCATION [LARGE SCALE ANALYSIS]</scope>
</reference>
<reference key="4">
    <citation type="journal article" date="2007" name="J. Proteome Res.">
        <title>Large-scale phosphorylation analysis of alpha-factor-arrested Saccharomyces cerevisiae.</title>
        <authorList>
            <person name="Li X."/>
            <person name="Gerber S.A."/>
            <person name="Rudner A.D."/>
            <person name="Beausoleil S.A."/>
            <person name="Haas W."/>
            <person name="Villen J."/>
            <person name="Elias J.E."/>
            <person name="Gygi S.P."/>
        </authorList>
    </citation>
    <scope>PHOSPHORYLATION [LARGE SCALE ANALYSIS] AT SER-185</scope>
    <scope>IDENTIFICATION BY MASS SPECTROMETRY [LARGE SCALE ANALYSIS]</scope>
    <source>
        <strain>ADR376</strain>
    </source>
</reference>
<reference key="5">
    <citation type="journal article" date="2008" name="Mol. Cell. Proteomics">
        <title>A multidimensional chromatography technology for in-depth phosphoproteome analysis.</title>
        <authorList>
            <person name="Albuquerque C.P."/>
            <person name="Smolka M.B."/>
            <person name="Payne S.H."/>
            <person name="Bafna V."/>
            <person name="Eng J."/>
            <person name="Zhou H."/>
        </authorList>
    </citation>
    <scope>PHOSPHORYLATION [LARGE SCALE ANALYSIS] AT SER-163</scope>
    <scope>IDENTIFICATION BY MASS SPECTROMETRY [LARGE SCALE ANALYSIS]</scope>
</reference>
<reference key="6">
    <citation type="journal article" date="2009" name="Science">
        <title>Global analysis of Cdk1 substrate phosphorylation sites provides insights into evolution.</title>
        <authorList>
            <person name="Holt L.J."/>
            <person name="Tuch B.B."/>
            <person name="Villen J."/>
            <person name="Johnson A.D."/>
            <person name="Gygi S.P."/>
            <person name="Morgan D.O."/>
        </authorList>
    </citation>
    <scope>PHOSPHORYLATION [LARGE SCALE ANALYSIS] AT SER-67; SER-185 AND SER-245</scope>
    <scope>IDENTIFICATION BY MASS SPECTROMETRY [LARGE SCALE ANALYSIS]</scope>
</reference>
<protein>
    <recommendedName>
        <fullName>Protein MUK1</fullName>
    </recommendedName>
</protein>
<organism>
    <name type="scientific">Saccharomyces cerevisiae (strain ATCC 204508 / S288c)</name>
    <name type="common">Baker's yeast</name>
    <dbReference type="NCBI Taxonomy" id="559292"/>
    <lineage>
        <taxon>Eukaryota</taxon>
        <taxon>Fungi</taxon>
        <taxon>Dikarya</taxon>
        <taxon>Ascomycota</taxon>
        <taxon>Saccharomycotina</taxon>
        <taxon>Saccharomycetes</taxon>
        <taxon>Saccharomycetales</taxon>
        <taxon>Saccharomycetaceae</taxon>
        <taxon>Saccharomyces</taxon>
    </lineage>
</organism>
<feature type="chain" id="PRO_0000255969" description="Protein MUK1">
    <location>
        <begin position="1"/>
        <end position="612"/>
    </location>
</feature>
<feature type="domain" description="VPS9" evidence="1">
    <location>
        <begin position="273"/>
        <end position="414"/>
    </location>
</feature>
<feature type="region of interest" description="Disordered" evidence="2">
    <location>
        <begin position="40"/>
        <end position="66"/>
    </location>
</feature>
<feature type="region of interest" description="Disordered" evidence="2">
    <location>
        <begin position="494"/>
        <end position="560"/>
    </location>
</feature>
<feature type="compositionally biased region" description="Basic and acidic residues" evidence="2">
    <location>
        <begin position="40"/>
        <end position="50"/>
    </location>
</feature>
<feature type="compositionally biased region" description="Polar residues" evidence="2">
    <location>
        <begin position="55"/>
        <end position="66"/>
    </location>
</feature>
<feature type="compositionally biased region" description="Low complexity" evidence="2">
    <location>
        <begin position="503"/>
        <end position="517"/>
    </location>
</feature>
<feature type="compositionally biased region" description="Polar residues" evidence="2">
    <location>
        <begin position="518"/>
        <end position="529"/>
    </location>
</feature>
<feature type="compositionally biased region" description="Basic and acidic residues" evidence="2">
    <location>
        <begin position="530"/>
        <end position="542"/>
    </location>
</feature>
<feature type="compositionally biased region" description="Low complexity" evidence="2">
    <location>
        <begin position="543"/>
        <end position="554"/>
    </location>
</feature>
<feature type="modified residue" description="Phosphoserine" evidence="6">
    <location>
        <position position="67"/>
    </location>
</feature>
<feature type="modified residue" description="Phosphoserine" evidence="5">
    <location>
        <position position="163"/>
    </location>
</feature>
<feature type="modified residue" description="Phosphoserine" evidence="4 6">
    <location>
        <position position="185"/>
    </location>
</feature>
<feature type="modified residue" description="Phosphoserine" evidence="6">
    <location>
        <position position="245"/>
    </location>
</feature>
<name>MUK1_YEAST</name>
<gene>
    <name type="primary">MUK1</name>
    <name type="ordered locus">YPL070W</name>
</gene>
<keyword id="KW-0963">Cytoplasm</keyword>
<keyword id="KW-0343">GTPase activation</keyword>
<keyword id="KW-0597">Phosphoprotein</keyword>
<keyword id="KW-1185">Reference proteome</keyword>
<dbReference type="EMBL" id="U41849">
    <property type="protein sequence ID" value="AAB68267.1"/>
    <property type="molecule type" value="Genomic_DNA"/>
</dbReference>
<dbReference type="EMBL" id="BK006949">
    <property type="protein sequence ID" value="DAA11361.1"/>
    <property type="molecule type" value="Genomic_DNA"/>
</dbReference>
<dbReference type="PIR" id="S61116">
    <property type="entry name" value="S61116"/>
</dbReference>
<dbReference type="RefSeq" id="NP_015255.1">
    <property type="nucleotide sequence ID" value="NM_001183884.1"/>
</dbReference>
<dbReference type="BioGRID" id="36109">
    <property type="interactions" value="110"/>
</dbReference>
<dbReference type="DIP" id="DIP-1326N"/>
<dbReference type="FunCoup" id="Q02866">
    <property type="interactions" value="98"/>
</dbReference>
<dbReference type="IntAct" id="Q02866">
    <property type="interactions" value="36"/>
</dbReference>
<dbReference type="MINT" id="Q02866"/>
<dbReference type="STRING" id="4932.YPL070W"/>
<dbReference type="GlyGen" id="Q02866">
    <property type="glycosylation" value="2 sites, 1 O-linked glycan (2 sites)"/>
</dbReference>
<dbReference type="iPTMnet" id="Q02866"/>
<dbReference type="PaxDb" id="4932-YPL070W"/>
<dbReference type="PeptideAtlas" id="Q02866"/>
<dbReference type="EnsemblFungi" id="YPL070W_mRNA">
    <property type="protein sequence ID" value="YPL070W"/>
    <property type="gene ID" value="YPL070W"/>
</dbReference>
<dbReference type="GeneID" id="856035"/>
<dbReference type="KEGG" id="sce:YPL070W"/>
<dbReference type="AGR" id="SGD:S000005991"/>
<dbReference type="SGD" id="S000005991">
    <property type="gene designation" value="MUK1"/>
</dbReference>
<dbReference type="VEuPathDB" id="FungiDB:YPL070W"/>
<dbReference type="eggNOG" id="ENOG502R0NJ">
    <property type="taxonomic scope" value="Eukaryota"/>
</dbReference>
<dbReference type="HOGENOM" id="CLU_031230_0_0_1"/>
<dbReference type="InParanoid" id="Q02866"/>
<dbReference type="OMA" id="MFHTPPI"/>
<dbReference type="OrthoDB" id="10264848at2759"/>
<dbReference type="BioCyc" id="YEAST:G3O-33978-MONOMER"/>
<dbReference type="Reactome" id="R-SCE-8876198">
    <property type="pathway name" value="RAB GEFs exchange GTP for GDP on RABs"/>
</dbReference>
<dbReference type="BioGRID-ORCS" id="856035">
    <property type="hits" value="2 hits in 10 CRISPR screens"/>
</dbReference>
<dbReference type="PRO" id="PR:Q02866"/>
<dbReference type="Proteomes" id="UP000002311">
    <property type="component" value="Chromosome XVI"/>
</dbReference>
<dbReference type="RNAct" id="Q02866">
    <property type="molecule type" value="protein"/>
</dbReference>
<dbReference type="GO" id="GO:0005737">
    <property type="term" value="C:cytoplasm"/>
    <property type="evidence" value="ECO:0007005"/>
    <property type="project" value="SGD"/>
</dbReference>
<dbReference type="GO" id="GO:0005829">
    <property type="term" value="C:cytosol"/>
    <property type="evidence" value="ECO:0000314"/>
    <property type="project" value="SGD"/>
</dbReference>
<dbReference type="GO" id="GO:0030139">
    <property type="term" value="C:endocytic vesicle"/>
    <property type="evidence" value="ECO:0000318"/>
    <property type="project" value="GO_Central"/>
</dbReference>
<dbReference type="GO" id="GO:0005096">
    <property type="term" value="F:GTPase activator activity"/>
    <property type="evidence" value="ECO:0007669"/>
    <property type="project" value="UniProtKB-KW"/>
</dbReference>
<dbReference type="GO" id="GO:0005085">
    <property type="term" value="F:guanyl-nucleotide exchange factor activity"/>
    <property type="evidence" value="ECO:0000314"/>
    <property type="project" value="SGD"/>
</dbReference>
<dbReference type="GO" id="GO:0031267">
    <property type="term" value="F:small GTPase binding"/>
    <property type="evidence" value="ECO:0000318"/>
    <property type="project" value="GO_Central"/>
</dbReference>
<dbReference type="GO" id="GO:0006895">
    <property type="term" value="P:Golgi to endosome transport"/>
    <property type="evidence" value="ECO:0000316"/>
    <property type="project" value="SGD"/>
</dbReference>
<dbReference type="GO" id="GO:0032511">
    <property type="term" value="P:late endosome to vacuole transport via multivesicular body sorting pathway"/>
    <property type="evidence" value="ECO:0000316"/>
    <property type="project" value="SGD"/>
</dbReference>
<dbReference type="GO" id="GO:0036010">
    <property type="term" value="P:protein localization to endosome"/>
    <property type="evidence" value="ECO:0000316"/>
    <property type="project" value="SGD"/>
</dbReference>
<dbReference type="FunFam" id="1.20.1050.80:FF:000014">
    <property type="entry name" value="Muk1p"/>
    <property type="match status" value="1"/>
</dbReference>
<dbReference type="Gene3D" id="1.20.1050.80">
    <property type="entry name" value="VPS9 domain"/>
    <property type="match status" value="1"/>
</dbReference>
<dbReference type="InterPro" id="IPR003123">
    <property type="entry name" value="VPS9"/>
</dbReference>
<dbReference type="InterPro" id="IPR037191">
    <property type="entry name" value="VPS9_dom_sf"/>
</dbReference>
<dbReference type="Pfam" id="PF02204">
    <property type="entry name" value="VPS9"/>
    <property type="match status" value="1"/>
</dbReference>
<dbReference type="SMART" id="SM00167">
    <property type="entry name" value="VPS9"/>
    <property type="match status" value="1"/>
</dbReference>
<dbReference type="SUPFAM" id="SSF109993">
    <property type="entry name" value="VPS9 domain"/>
    <property type="match status" value="1"/>
</dbReference>
<dbReference type="PROSITE" id="PS51205">
    <property type="entry name" value="VPS9"/>
    <property type="match status" value="1"/>
</dbReference>
<proteinExistence type="evidence at protein level"/>
<accession>Q02866</accession>
<accession>D6W3U5</accession>
<evidence type="ECO:0000255" key="1">
    <source>
        <dbReference type="PROSITE-ProRule" id="PRU00550"/>
    </source>
</evidence>
<evidence type="ECO:0000256" key="2">
    <source>
        <dbReference type="SAM" id="MobiDB-lite"/>
    </source>
</evidence>
<evidence type="ECO:0000269" key="3">
    <source>
    </source>
</evidence>
<evidence type="ECO:0007744" key="4">
    <source>
    </source>
</evidence>
<evidence type="ECO:0007744" key="5">
    <source>
    </source>
</evidence>
<evidence type="ECO:0007744" key="6">
    <source>
    </source>
</evidence>
<comment type="function">
    <text>Putative GTPase-activating protein.</text>
</comment>
<comment type="interaction">
    <interactant intactId="EBI-32646">
        <id>Q02866</id>
    </interactant>
    <interactant intactId="EBI-6260">
        <id>P32502</id>
        <label>GCD7</label>
    </interactant>
    <organismsDiffer>false</organismsDiffer>
    <experiments>3</experiments>
</comment>
<comment type="subcellular location">
    <subcellularLocation>
        <location evidence="3">Cytoplasm</location>
    </subcellularLocation>
</comment>
<sequence>MARQLFTPPITNPRFDPNQSIRESYKNTTGGMQFQQNLHEDQNDNERSSCDGDENSTTGERLENNKSPILTKQEIDEALNTVTNLPPELSKLIDIFIDDLKQPKYVRPLSVLQLSSLFQSFYIKFDKASFQHVSSANNNGYYFSGGGSSSFLAAKETLSSGLSGIFGRSRSSSGNSLMRPRRSSSLFSNESISNSTNATQMLSPEEIKKQLKINELNNMKIEKYMELCERDVFKKILIVGTSVSSPNKMKTFKPHQLQTFKVGNLFRNSVEFTEYNKLLNEKILCLSKLSTMNKINLIKFLSLNNGIDPEPKFEEIKDILYEFTYHSISPCEKIKALLKLHEIMTYSQEMSNDDYLSLLIYYIITIVPRDIFLNAEFIRLFRYKKKLVETESFALTNLEAALVFVEGLTKNDFSNELQDKLTVNESKILENSISSRVSLPSKTAIMHKNNGNNGSNLGDIVTPTIQRPDVTRSNSYDGFRTVFDSSLKNIIGKIRSYTPPHPNNTSNNNLHSSNNLNIPRSSSQLSMELSNRDTTEMSRDGSRSTSSSSRSSASLEHGNREFTGDLTVTASINGADKKEFQKSWKKYKGYKFEDLTICELRDLFEIYQKMMQ</sequence>